<evidence type="ECO:0000255" key="1">
    <source>
        <dbReference type="HAMAP-Rule" id="MF_03152"/>
    </source>
</evidence>
<evidence type="ECO:0000305" key="2"/>
<sequence length="440" mass="50594">MNCSELLPPASVRGMRELQRAEFQKRVQVPQLRVPEQQVQRVIPLVKKFLLKMEHMHPVRAVDKSREILLHPMPIKAWESLPTEDLQKQQVTQENFSFVELELNYENWSANEILKSVLPEEEEGMTSYSRIGHIVHLNLRDHLLPYKQLIGEVLRDKLPNCRTVVNKASSIDNTYRNFQLELICGEAEYQVETKENGIPFEFDFSKVYWNPRLSTEHERIVKLLQPGDVLYDVFAGVGPFSVPAAKKRCHVLANDLNPVSFHWLQHNAKRNKCLSNIKMSNKDGREFILKELRADLLQRLRLTDTSSYATHITMNLPAMAVEFLDAFRGLYTDNELADISDAVVFPTVHVYSFAKGENTKALVRAQVEQNLASTLDEKQLQGISFVRNVAPNKDMYRVSFKLTRHLLTTSKEAEANNVRKRCAEDEKVDPEVAATKVKCV</sequence>
<feature type="chain" id="PRO_0000414130" description="tRNA (guanine(37)-N(1))-methyltransferase">
    <location>
        <begin position="1"/>
        <end position="440"/>
    </location>
</feature>
<feature type="binding site" evidence="1">
    <location>
        <position position="217"/>
    </location>
    <ligand>
        <name>S-adenosyl-L-methionine</name>
        <dbReference type="ChEBI" id="CHEBI:59789"/>
    </ligand>
</feature>
<feature type="binding site" evidence="1">
    <location>
        <begin position="255"/>
        <end position="256"/>
    </location>
    <ligand>
        <name>S-adenosyl-L-methionine</name>
        <dbReference type="ChEBI" id="CHEBI:59789"/>
    </ligand>
</feature>
<feature type="binding site" evidence="1">
    <location>
        <begin position="283"/>
        <end position="284"/>
    </location>
    <ligand>
        <name>S-adenosyl-L-methionine</name>
        <dbReference type="ChEBI" id="CHEBI:59789"/>
    </ligand>
</feature>
<feature type="binding site" evidence="1">
    <location>
        <position position="315"/>
    </location>
    <ligand>
        <name>S-adenosyl-L-methionine</name>
        <dbReference type="ChEBI" id="CHEBI:59789"/>
    </ligand>
</feature>
<reference key="1">
    <citation type="journal article" date="2005" name="Genome Res.">
        <title>Comparative genome sequencing of Drosophila pseudoobscura: chromosomal, gene, and cis-element evolution.</title>
        <authorList>
            <person name="Richards S."/>
            <person name="Liu Y."/>
            <person name="Bettencourt B.R."/>
            <person name="Hradecky P."/>
            <person name="Letovsky S."/>
            <person name="Nielsen R."/>
            <person name="Thornton K."/>
            <person name="Hubisz M.J."/>
            <person name="Chen R."/>
            <person name="Meisel R.P."/>
            <person name="Couronne O."/>
            <person name="Hua S."/>
            <person name="Smith M.A."/>
            <person name="Zhang P."/>
            <person name="Liu J."/>
            <person name="Bussemaker H.J."/>
            <person name="van Batenburg M.F."/>
            <person name="Howells S.L."/>
            <person name="Scherer S.E."/>
            <person name="Sodergren E."/>
            <person name="Matthews B.B."/>
            <person name="Crosby M.A."/>
            <person name="Schroeder A.J."/>
            <person name="Ortiz-Barrientos D."/>
            <person name="Rives C.M."/>
            <person name="Metzker M.L."/>
            <person name="Muzny D.M."/>
            <person name="Scott G."/>
            <person name="Steffen D."/>
            <person name="Wheeler D.A."/>
            <person name="Worley K.C."/>
            <person name="Havlak P."/>
            <person name="Durbin K.J."/>
            <person name="Egan A."/>
            <person name="Gill R."/>
            <person name="Hume J."/>
            <person name="Morgan M.B."/>
            <person name="Miner G."/>
            <person name="Hamilton C."/>
            <person name="Huang Y."/>
            <person name="Waldron L."/>
            <person name="Verduzco D."/>
            <person name="Clerc-Blankenburg K.P."/>
            <person name="Dubchak I."/>
            <person name="Noor M.A.F."/>
            <person name="Anderson W."/>
            <person name="White K.P."/>
            <person name="Clark A.G."/>
            <person name="Schaeffer S.W."/>
            <person name="Gelbart W.M."/>
            <person name="Weinstock G.M."/>
            <person name="Gibbs R.A."/>
        </authorList>
    </citation>
    <scope>NUCLEOTIDE SEQUENCE [LARGE SCALE GENOMIC DNA]</scope>
    <source>
        <strain>MV2-25 / Tucson 14011-0121.94</strain>
    </source>
</reference>
<organism>
    <name type="scientific">Drosophila pseudoobscura pseudoobscura</name>
    <name type="common">Fruit fly</name>
    <dbReference type="NCBI Taxonomy" id="46245"/>
    <lineage>
        <taxon>Eukaryota</taxon>
        <taxon>Metazoa</taxon>
        <taxon>Ecdysozoa</taxon>
        <taxon>Arthropoda</taxon>
        <taxon>Hexapoda</taxon>
        <taxon>Insecta</taxon>
        <taxon>Pterygota</taxon>
        <taxon>Neoptera</taxon>
        <taxon>Endopterygota</taxon>
        <taxon>Diptera</taxon>
        <taxon>Brachycera</taxon>
        <taxon>Muscomorpha</taxon>
        <taxon>Ephydroidea</taxon>
        <taxon>Drosophilidae</taxon>
        <taxon>Drosophila</taxon>
        <taxon>Sophophora</taxon>
    </lineage>
</organism>
<comment type="function">
    <text evidence="1">Specifically methylates the N1 position of guanosine-37 in various cytoplasmic and mitochondrial tRNAs. Methylation is not dependent on the nature of the nucleoside 5' of the target nucleoside. This is the first step in the biosynthesis of wybutosine (yW), a modified base adjacent to the anticodon of tRNAs and required for accurate decoding.</text>
</comment>
<comment type="catalytic activity">
    <reaction evidence="1">
        <text>guanosine(37) in tRNA + S-adenosyl-L-methionine = N(1)-methylguanosine(37) in tRNA + S-adenosyl-L-homocysteine + H(+)</text>
        <dbReference type="Rhea" id="RHEA:36899"/>
        <dbReference type="Rhea" id="RHEA-COMP:10145"/>
        <dbReference type="Rhea" id="RHEA-COMP:10147"/>
        <dbReference type="ChEBI" id="CHEBI:15378"/>
        <dbReference type="ChEBI" id="CHEBI:57856"/>
        <dbReference type="ChEBI" id="CHEBI:59789"/>
        <dbReference type="ChEBI" id="CHEBI:73542"/>
        <dbReference type="ChEBI" id="CHEBI:74269"/>
        <dbReference type="EC" id="2.1.1.228"/>
    </reaction>
</comment>
<comment type="subunit">
    <text evidence="1">Monomer.</text>
</comment>
<comment type="subcellular location">
    <subcellularLocation>
        <location evidence="1">Mitochondrion matrix</location>
    </subcellularLocation>
    <subcellularLocation>
        <location evidence="1">Nucleus</location>
    </subcellularLocation>
    <subcellularLocation>
        <location evidence="1">Cytoplasm</location>
    </subcellularLocation>
    <text evidence="1">Predominantly in the mitochondria and in the nucleus.</text>
</comment>
<comment type="similarity">
    <text evidence="2">Belongs to the class I-like SAM-binding methyltransferase superfamily. TRM5/TYW2 family.</text>
</comment>
<accession>B5DPF1</accession>
<protein>
    <recommendedName>
        <fullName evidence="1">tRNA (guanine(37)-N(1))-methyltransferase</fullName>
        <ecNumber evidence="1">2.1.1.228</ecNumber>
    </recommendedName>
    <alternativeName>
        <fullName evidence="1">M1G-methyltransferase</fullName>
    </alternativeName>
    <alternativeName>
        <fullName evidence="1">tRNA [GM37] methyltransferase</fullName>
    </alternativeName>
    <alternativeName>
        <fullName evidence="1">tRNA methyltransferase 5 homolog</fullName>
    </alternativeName>
</protein>
<gene>
    <name type="ORF">GA23546</name>
</gene>
<name>TRM5_DROPS</name>
<keyword id="KW-0963">Cytoplasm</keyword>
<keyword id="KW-0489">Methyltransferase</keyword>
<keyword id="KW-0496">Mitochondrion</keyword>
<keyword id="KW-0539">Nucleus</keyword>
<keyword id="KW-1185">Reference proteome</keyword>
<keyword id="KW-0949">S-adenosyl-L-methionine</keyword>
<keyword id="KW-0808">Transferase</keyword>
<keyword id="KW-0819">tRNA processing</keyword>
<proteinExistence type="inferred from homology"/>
<dbReference type="EC" id="2.1.1.228" evidence="1"/>
<dbReference type="EMBL" id="CH379069">
    <property type="protein sequence ID" value="EDY73530.1"/>
    <property type="molecule type" value="Genomic_DNA"/>
</dbReference>
<dbReference type="SMR" id="B5DPF1"/>
<dbReference type="FunCoup" id="B5DPF1">
    <property type="interactions" value="1166"/>
</dbReference>
<dbReference type="STRING" id="46245.B5DPF1"/>
<dbReference type="eggNOG" id="KOG2078">
    <property type="taxonomic scope" value="Eukaryota"/>
</dbReference>
<dbReference type="HOGENOM" id="CLU_022610_2_3_1"/>
<dbReference type="InParanoid" id="B5DPF1"/>
<dbReference type="OMA" id="VGSHSQF"/>
<dbReference type="Proteomes" id="UP000001819">
    <property type="component" value="Unplaced"/>
</dbReference>
<dbReference type="GO" id="GO:0005759">
    <property type="term" value="C:mitochondrial matrix"/>
    <property type="evidence" value="ECO:0007669"/>
    <property type="project" value="UniProtKB-SubCell"/>
</dbReference>
<dbReference type="GO" id="GO:0005634">
    <property type="term" value="C:nucleus"/>
    <property type="evidence" value="ECO:0007669"/>
    <property type="project" value="UniProtKB-SubCell"/>
</dbReference>
<dbReference type="GO" id="GO:0052906">
    <property type="term" value="F:tRNA (guanine(37)-N1)-methyltransferase activity"/>
    <property type="evidence" value="ECO:0007669"/>
    <property type="project" value="UniProtKB-UniRule"/>
</dbReference>
<dbReference type="GO" id="GO:0070901">
    <property type="term" value="P:mitochondrial tRNA methylation"/>
    <property type="evidence" value="ECO:0007669"/>
    <property type="project" value="TreeGrafter"/>
</dbReference>
<dbReference type="GO" id="GO:0002939">
    <property type="term" value="P:tRNA N1-guanine methylation"/>
    <property type="evidence" value="ECO:0007669"/>
    <property type="project" value="TreeGrafter"/>
</dbReference>
<dbReference type="FunFam" id="3.30.300.110:FF:000001">
    <property type="entry name" value="tRNA (guanine(37)-N1)-methyltransferase"/>
    <property type="match status" value="1"/>
</dbReference>
<dbReference type="FunFam" id="3.40.50.150:FF:000102">
    <property type="entry name" value="tRNA (guanine(37)-N1)-methyltransferase"/>
    <property type="match status" value="1"/>
</dbReference>
<dbReference type="Gene3D" id="3.30.300.110">
    <property type="entry name" value="Met-10+ protein-like domains"/>
    <property type="match status" value="1"/>
</dbReference>
<dbReference type="Gene3D" id="3.40.50.150">
    <property type="entry name" value="Vaccinia Virus protein VP39"/>
    <property type="match status" value="1"/>
</dbReference>
<dbReference type="HAMAP" id="MF_03152">
    <property type="entry name" value="TRM5"/>
    <property type="match status" value="1"/>
</dbReference>
<dbReference type="InterPro" id="IPR030382">
    <property type="entry name" value="MeTrfase_TRM5/TYW2"/>
</dbReference>
<dbReference type="InterPro" id="IPR029063">
    <property type="entry name" value="SAM-dependent_MTases_sf"/>
</dbReference>
<dbReference type="InterPro" id="IPR056743">
    <property type="entry name" value="TRM5-TYW2-like_MTfase"/>
</dbReference>
<dbReference type="InterPro" id="IPR056744">
    <property type="entry name" value="TRM5/TYW2-like_N"/>
</dbReference>
<dbReference type="InterPro" id="IPR025792">
    <property type="entry name" value="tRNA_Gua_MeTrfase_euk"/>
</dbReference>
<dbReference type="PANTHER" id="PTHR23245:SF36">
    <property type="entry name" value="TRNA (GUANINE(37)-N1)-METHYLTRANSFERASE"/>
    <property type="match status" value="1"/>
</dbReference>
<dbReference type="PANTHER" id="PTHR23245">
    <property type="entry name" value="TRNA METHYLTRANSFERASE"/>
    <property type="match status" value="1"/>
</dbReference>
<dbReference type="Pfam" id="PF02475">
    <property type="entry name" value="TRM5-TYW2_MTfase"/>
    <property type="match status" value="1"/>
</dbReference>
<dbReference type="Pfam" id="PF25133">
    <property type="entry name" value="TYW2_N_2"/>
    <property type="match status" value="1"/>
</dbReference>
<dbReference type="SUPFAM" id="SSF53335">
    <property type="entry name" value="S-adenosyl-L-methionine-dependent methyltransferases"/>
    <property type="match status" value="1"/>
</dbReference>
<dbReference type="PROSITE" id="PS51684">
    <property type="entry name" value="SAM_MT_TRM5_TYW2"/>
    <property type="match status" value="1"/>
</dbReference>